<gene>
    <name evidence="13" type="primary">mtm-3</name>
    <name evidence="13" type="ORF">T24A11.1</name>
</gene>
<organism>
    <name type="scientific">Caenorhabditis elegans</name>
    <dbReference type="NCBI Taxonomy" id="6239"/>
    <lineage>
        <taxon>Eukaryota</taxon>
        <taxon>Metazoa</taxon>
        <taxon>Ecdysozoa</taxon>
        <taxon>Nematoda</taxon>
        <taxon>Chromadorea</taxon>
        <taxon>Rhabditida</taxon>
        <taxon>Rhabditina</taxon>
        <taxon>Rhabditomorpha</taxon>
        <taxon>Rhabditoidea</taxon>
        <taxon>Rhabditidae</taxon>
        <taxon>Peloderinae</taxon>
        <taxon>Caenorhabditis</taxon>
    </lineage>
</organism>
<sequence length="1006" mass="113614">MTVTSSAAIDIGGGGGGRRSDRLDSDRTSEDMSFIASPANESFQIGASFVDVQNESSGSIDTATATLHELNYTFGMPPVTEESENMPQNYETVVELLPGEERAPINKLTEFPIEGGSLFVTNFRIVVILKDKEVEEALRFLVFPLQDIEQIDLAIPAFIHLSLKIGRMFTICFKTAEDAALVHKILYTAFQRLNRPISSIYTSRPQDWTSKNTDNPMQSLNAFAWKFSEAVDELDRDGKLPSWLLRADSVAQEITHIDFNRLGMSEHFQISSVNENFEVCPTYPEKIIVPKGITDDDIRKGAPYRSIGRFPAVIWRCRKTRAVLMRSSQPQVGILSWRNPTDEKIIEEAVKASRIEGEEKKQFIIMDARGYTSAFANRARSGGFENTEYYQQAKLEFLGLPNIHAVRGSFNNVRTMLHNLGPNEQLLTSLQTTGWLLNLSNLLVNAANCADHLSKGHSVLVHCSDGWDRTTQVTTLAKIMLDEYYRTVKGFEELIRRDWIAFGHKLYDRQLVAFGNWGTSDERSPVFLQFLEAVRHLQREQPTLFQFTHAYLIKLAKHAYSGLFGSFLFNSHKERREAMEKCKGTLVDIWRFIGPHNEEYVNQSFDEHYTGAVKPVNVSVINLRVWHEVFADEEEHYTQIFSPKEERPLSGCTTPMNTSTSTNLVKSKSSESINSLNVDGSAKESSQQHPTCSTTPSDNTNSLPMSTSFIQQSLYQPKVRGVAAIDRDGVIRFEDDEQAMLRKKNKLRAEEIRRKDEKIEELRRRAVLDTNKVSPGQRQSYSESDVETTGTLERVMSDVSMVDPVNELPHFKPNTTWEGESGHCAYCKKEFNKLSVYVEDRQHHCRNCGRVVCEDCSKNRFSVIEEGKSVQKRACDSCYDSMHETDLKLSSSSTTTTSSSTKIENDSNVPGLDNNSDNVSENVSENAIPDIIVEEKEAEDPIKEAESPSKETKCPKTLRNFISFSPKSSMRKNKVHSRDPLKSIDEGSSSQQAESDDVLDVNEQPL</sequence>
<reference key="1">
    <citation type="journal article" date="1998" name="Hum. Mol. Genet.">
        <title>Characterization of the myotubularin dual specificity phosphatase gene family from yeast to human.</title>
        <authorList>
            <person name="Laporte J."/>
            <person name="Blondeau F."/>
            <person name="Buj-Bello A."/>
            <person name="Tentler D."/>
            <person name="Kretz C."/>
            <person name="Dahl N."/>
            <person name="Mandel J.-L."/>
        </authorList>
    </citation>
    <scope>NUCLEOTIDE SEQUENCE [MRNA] (ISOFORM A)</scope>
</reference>
<reference key="2">
    <citation type="journal article" date="2008" name="J. Cell. Biochem.">
        <title>Characterization and functional studies of a FYVE domain-containing phosphatase in C. elegans.</title>
        <authorList>
            <person name="Ma J."/>
            <person name="Zeng F."/>
            <person name="Ho W.T."/>
            <person name="Teng L."/>
            <person name="Li Q."/>
            <person name="Fu X."/>
            <person name="Zhao Z.J."/>
        </authorList>
    </citation>
    <scope>NUCLEOTIDE SEQUENCE [MRNA] (ISOFORM B)</scope>
    <scope>FUNCTION</scope>
    <scope>CATALYTIC ACTIVITY</scope>
    <scope>PHOSPHATIDYLINOSITOL 3-PHOSPHATE-BINDING</scope>
    <scope>ACTIVITY REGULATION</scope>
    <scope>TISSUE SPECIFICITY</scope>
    <scope>DEVELOPMENTAL STAGE</scope>
    <scope>DISRUPTION PHENOTYPE</scope>
</reference>
<reference key="3">
    <citation type="journal article" date="1998" name="Science">
        <title>Genome sequence of the nematode C. elegans: a platform for investigating biology.</title>
        <authorList>
            <consortium name="The C. elegans sequencing consortium"/>
        </authorList>
    </citation>
    <scope>NUCLEOTIDE SEQUENCE [LARGE SCALE GENOMIC DNA]</scope>
    <scope>ALTERNATIVE SPLICING</scope>
    <source>
        <strain>Bristol N2</strain>
    </source>
</reference>
<reference key="4">
    <citation type="journal article" date="2003" name="J. Biol. Chem.">
        <title>Genetic analysis of the myotubularin family of phosphatases in Caenorhabditis elegans.</title>
        <authorList>
            <person name="Xue Y."/>
            <person name="Fares H."/>
            <person name="Grant B."/>
            <person name="Li Z."/>
            <person name="Rose A.M."/>
            <person name="Clark S.G."/>
            <person name="Skolnik E.Y."/>
        </authorList>
    </citation>
    <scope>TISSUE SPECIFICITY</scope>
</reference>
<reference key="5">
    <citation type="journal article" date="2014" name="EMBO Rep.">
        <title>PI3P phosphatase activity is required for autophagosome maturation and autolysosome formation.</title>
        <authorList>
            <person name="Wu Y."/>
            <person name="Cheng S."/>
            <person name="Zhao H."/>
            <person name="Zou W."/>
            <person name="Yoshina S."/>
            <person name="Mitani S."/>
            <person name="Zhang H."/>
            <person name="Wang X."/>
        </authorList>
    </citation>
    <scope>FUNCTION</scope>
    <scope>CATALYTIC ACTIVITY</scope>
    <scope>SUBCELLULAR LOCATION</scope>
    <scope>TISSUE SPECIFICITY</scope>
    <scope>DEVELOPMENTAL STAGE</scope>
    <scope>ACTIVE SITE</scope>
    <scope>MUTAGENESIS OF 67-LEU--LEU-1006</scope>
</reference>
<accession>Q22712</accession>
<accession>A8NBE6</accession>
<accession>Q9U360</accession>
<accession>Q9XTK4</accession>
<feature type="chain" id="PRO_0000094947" description="Phosphatidylinositol-3,5-bisphosphate 3-phosphatase MTMR3">
    <location>
        <begin position="1"/>
        <end position="1006"/>
    </location>
</feature>
<feature type="domain" description="Myotubularin phosphatase" evidence="4">
    <location>
        <begin position="224"/>
        <end position="630"/>
    </location>
</feature>
<feature type="zinc finger region" description="FYVE-type" evidence="3">
    <location>
        <begin position="818"/>
        <end position="883"/>
    </location>
</feature>
<feature type="region of interest" description="Disordered" evidence="6">
    <location>
        <begin position="1"/>
        <end position="29"/>
    </location>
</feature>
<feature type="region of interest" description="Disordered" evidence="6">
    <location>
        <begin position="641"/>
        <end position="705"/>
    </location>
</feature>
<feature type="region of interest" description="Disordered" evidence="6">
    <location>
        <begin position="886"/>
        <end position="1006"/>
    </location>
</feature>
<feature type="compositionally biased region" description="Low complexity" evidence="6">
    <location>
        <begin position="1"/>
        <end position="10"/>
    </location>
</feature>
<feature type="compositionally biased region" description="Basic and acidic residues" evidence="6">
    <location>
        <begin position="18"/>
        <end position="29"/>
    </location>
</feature>
<feature type="compositionally biased region" description="Polar residues" evidence="6">
    <location>
        <begin position="651"/>
        <end position="705"/>
    </location>
</feature>
<feature type="compositionally biased region" description="Low complexity" evidence="6">
    <location>
        <begin position="890"/>
        <end position="901"/>
    </location>
</feature>
<feature type="compositionally biased region" description="Low complexity" evidence="6">
    <location>
        <begin position="913"/>
        <end position="926"/>
    </location>
</feature>
<feature type="compositionally biased region" description="Basic and acidic residues" evidence="6">
    <location>
        <begin position="933"/>
        <end position="954"/>
    </location>
</feature>
<feature type="compositionally biased region" description="Basic and acidic residues" evidence="6">
    <location>
        <begin position="976"/>
        <end position="985"/>
    </location>
</feature>
<feature type="active site" description="Phosphocysteine intermediate" evidence="5 9">
    <location>
        <position position="463"/>
    </location>
</feature>
<feature type="binding site" evidence="1">
    <location>
        <position position="377"/>
    </location>
    <ligand>
        <name>a 1,2-diacyl-sn-glycero-3-phospho-(1D-myo-inositol-3,5-bisphosphate)</name>
        <dbReference type="ChEBI" id="CHEBI:57923"/>
    </ligand>
</feature>
<feature type="binding site" evidence="1">
    <location>
        <position position="377"/>
    </location>
    <ligand>
        <name>a 1,2-diacyl-sn-glycero-3-phospho-(1D-myo-inositol-3-phosphate)</name>
        <dbReference type="ChEBI" id="CHEBI:58088"/>
    </ligand>
</feature>
<feature type="binding site" evidence="1">
    <location>
        <position position="402"/>
    </location>
    <ligand>
        <name>a 1,2-diacyl-sn-glycero-3-phospho-(1D-myo-inositol-3,5-bisphosphate)</name>
        <dbReference type="ChEBI" id="CHEBI:57923"/>
    </ligand>
</feature>
<feature type="binding site" evidence="1">
    <location>
        <position position="402"/>
    </location>
    <ligand>
        <name>a 1,2-diacyl-sn-glycero-3-phospho-(1D-myo-inositol-3-phosphate)</name>
        <dbReference type="ChEBI" id="CHEBI:58088"/>
    </ligand>
</feature>
<feature type="binding site" evidence="1">
    <location>
        <position position="403"/>
    </location>
    <ligand>
        <name>a 1,2-diacyl-sn-glycero-3-phospho-(1D-myo-inositol-3,5-bisphosphate)</name>
        <dbReference type="ChEBI" id="CHEBI:57923"/>
    </ligand>
</feature>
<feature type="binding site" evidence="1">
    <location>
        <position position="403"/>
    </location>
    <ligand>
        <name>a 1,2-diacyl-sn-glycero-3-phospho-(1D-myo-inositol-3-phosphate)</name>
        <dbReference type="ChEBI" id="CHEBI:58088"/>
    </ligand>
</feature>
<feature type="binding site" evidence="1">
    <location>
        <position position="464"/>
    </location>
    <ligand>
        <name>a 1,2-diacyl-sn-glycero-3-phospho-(1D-myo-inositol-3,5-bisphosphate)</name>
        <dbReference type="ChEBI" id="CHEBI:57923"/>
    </ligand>
</feature>
<feature type="binding site" evidence="1">
    <location>
        <position position="464"/>
    </location>
    <ligand>
        <name>a 1,2-diacyl-sn-glycero-3-phospho-(1D-myo-inositol-3-phosphate)</name>
        <dbReference type="ChEBI" id="CHEBI:58088"/>
    </ligand>
</feature>
<feature type="binding site" evidence="1">
    <location>
        <position position="465"/>
    </location>
    <ligand>
        <name>a 1,2-diacyl-sn-glycero-3-phospho-(1D-myo-inositol-3,5-bisphosphate)</name>
        <dbReference type="ChEBI" id="CHEBI:57923"/>
    </ligand>
</feature>
<feature type="binding site" evidence="1">
    <location>
        <position position="465"/>
    </location>
    <ligand>
        <name>a 1,2-diacyl-sn-glycero-3-phospho-(1D-myo-inositol-3-phosphate)</name>
        <dbReference type="ChEBI" id="CHEBI:58088"/>
    </ligand>
</feature>
<feature type="binding site" evidence="1">
    <location>
        <position position="466"/>
    </location>
    <ligand>
        <name>a 1,2-diacyl-sn-glycero-3-phospho-(1D-myo-inositol-3,5-bisphosphate)</name>
        <dbReference type="ChEBI" id="CHEBI:57923"/>
    </ligand>
</feature>
<feature type="binding site" evidence="1">
    <location>
        <position position="466"/>
    </location>
    <ligand>
        <name>a 1,2-diacyl-sn-glycero-3-phospho-(1D-myo-inositol-3-phosphate)</name>
        <dbReference type="ChEBI" id="CHEBI:58088"/>
    </ligand>
</feature>
<feature type="binding site" evidence="1">
    <location>
        <position position="467"/>
    </location>
    <ligand>
        <name>a 1,2-diacyl-sn-glycero-3-phospho-(1D-myo-inositol-3,5-bisphosphate)</name>
        <dbReference type="ChEBI" id="CHEBI:57923"/>
    </ligand>
</feature>
<feature type="binding site" evidence="1">
    <location>
        <position position="467"/>
    </location>
    <ligand>
        <name>a 1,2-diacyl-sn-glycero-3-phospho-(1D-myo-inositol-3-phosphate)</name>
        <dbReference type="ChEBI" id="CHEBI:58088"/>
    </ligand>
</feature>
<feature type="binding site" evidence="1">
    <location>
        <position position="468"/>
    </location>
    <ligand>
        <name>a 1,2-diacyl-sn-glycero-3-phospho-(1D-myo-inositol-3,5-bisphosphate)</name>
        <dbReference type="ChEBI" id="CHEBI:57923"/>
    </ligand>
</feature>
<feature type="binding site" evidence="1">
    <location>
        <position position="468"/>
    </location>
    <ligand>
        <name>a 1,2-diacyl-sn-glycero-3-phospho-(1D-myo-inositol-3-phosphate)</name>
        <dbReference type="ChEBI" id="CHEBI:58088"/>
    </ligand>
</feature>
<feature type="binding site" evidence="1">
    <location>
        <position position="469"/>
    </location>
    <ligand>
        <name>a 1,2-diacyl-sn-glycero-3-phospho-(1D-myo-inositol-3,5-bisphosphate)</name>
        <dbReference type="ChEBI" id="CHEBI:57923"/>
    </ligand>
</feature>
<feature type="binding site" evidence="1">
    <location>
        <position position="469"/>
    </location>
    <ligand>
        <name>a 1,2-diacyl-sn-glycero-3-phospho-(1D-myo-inositol-3-phosphate)</name>
        <dbReference type="ChEBI" id="CHEBI:58088"/>
    </ligand>
</feature>
<feature type="binding site" evidence="1">
    <location>
        <position position="505"/>
    </location>
    <ligand>
        <name>a 1,2-diacyl-sn-glycero-3-phospho-(1D-myo-inositol-3,5-bisphosphate)</name>
        <dbReference type="ChEBI" id="CHEBI:57923"/>
    </ligand>
</feature>
<feature type="binding site" evidence="1">
    <location>
        <position position="509"/>
    </location>
    <ligand>
        <name>a 1,2-diacyl-sn-glycero-3-phospho-(1D-myo-inositol-3,5-bisphosphate)</name>
        <dbReference type="ChEBI" id="CHEBI:57923"/>
    </ligand>
</feature>
<feature type="binding site" evidence="1">
    <location>
        <position position="509"/>
    </location>
    <ligand>
        <name>a 1,2-diacyl-sn-glycero-3-phospho-(1D-myo-inositol-3-phosphate)</name>
        <dbReference type="ChEBI" id="CHEBI:58088"/>
    </ligand>
</feature>
<feature type="binding site" evidence="3">
    <location>
        <position position="824"/>
    </location>
    <ligand>
        <name>Zn(2+)</name>
        <dbReference type="ChEBI" id="CHEBI:29105"/>
        <label>1</label>
    </ligand>
</feature>
<feature type="binding site" evidence="3">
    <location>
        <position position="827"/>
    </location>
    <ligand>
        <name>Zn(2+)</name>
        <dbReference type="ChEBI" id="CHEBI:29105"/>
        <label>1</label>
    </ligand>
</feature>
<feature type="binding site" evidence="3">
    <location>
        <position position="845"/>
    </location>
    <ligand>
        <name>Zn(2+)</name>
        <dbReference type="ChEBI" id="CHEBI:29105"/>
        <label>2</label>
    </ligand>
</feature>
<feature type="binding site" evidence="3">
    <location>
        <position position="848"/>
    </location>
    <ligand>
        <name>Zn(2+)</name>
        <dbReference type="ChEBI" id="CHEBI:29105"/>
        <label>2</label>
    </ligand>
</feature>
<feature type="binding site" evidence="3">
    <location>
        <position position="853"/>
    </location>
    <ligand>
        <name>Zn(2+)</name>
        <dbReference type="ChEBI" id="CHEBI:29105"/>
        <label>1</label>
    </ligand>
</feature>
<feature type="binding site" evidence="3">
    <location>
        <position position="856"/>
    </location>
    <ligand>
        <name>Zn(2+)</name>
        <dbReference type="ChEBI" id="CHEBI:29105"/>
        <label>1</label>
    </ligand>
</feature>
<feature type="binding site" evidence="3">
    <location>
        <position position="875"/>
    </location>
    <ligand>
        <name>Zn(2+)</name>
        <dbReference type="ChEBI" id="CHEBI:29105"/>
        <label>2</label>
    </ligand>
</feature>
<feature type="binding site" evidence="3">
    <location>
        <position position="878"/>
    </location>
    <ligand>
        <name>Zn(2+)</name>
        <dbReference type="ChEBI" id="CHEBI:29105"/>
        <label>2</label>
    </ligand>
</feature>
<feature type="splice variant" id="VSP_035035" description="In isoform b." evidence="10">
    <location>
        <begin position="41"/>
        <end position="44"/>
    </location>
</feature>
<feature type="splice variant" id="VSP_035036" description="In isoform b." evidence="10">
    <original>SSSTTTTSSSTKIENDSNVPGLDNNSDNVSENVSENAIPDIIVEEKEAEDPIKEAESPSKETKCPKTLRNFISFS</original>
    <variation>RATSLSEMSSFDSFGPSSPPASSTSSSSLNMLASMSPTRPQPIPISCKSSSNSISSPRPSPGEFSRHSSTQAVKG</variation>
    <location>
        <begin position="891"/>
        <end position="965"/>
    </location>
</feature>
<feature type="splice variant" id="VSP_035037" description="In isoform b." evidence="10">
    <location>
        <begin position="966"/>
        <end position="1006"/>
    </location>
</feature>
<feature type="mutagenesis site" description="In tm4475; viable but display 36% embryonic lethality and 45% larval arrest. Reduces survival of L1 larvae in nutrient-deprived conditions. Defective autophagosome maturation and degradation of autophagic protein aggregates." evidence="9">
    <location>
        <begin position="67"/>
        <end position="1006"/>
    </location>
</feature>
<feature type="mutagenesis site" description="Abolished phosphatase activity towards phosphatidylinositol 3-phosphate (PI3P) phosphatidylinositol 3,5-bisphosphate (PI35P)." evidence="9">
    <original>C</original>
    <variation>S</variation>
    <location>
        <position position="463"/>
    </location>
</feature>
<keyword id="KW-0025">Alternative splicing</keyword>
<keyword id="KW-0963">Cytoplasm</keyword>
<keyword id="KW-0217">Developmental protein</keyword>
<keyword id="KW-0378">Hydrolase</keyword>
<keyword id="KW-0443">Lipid metabolism</keyword>
<keyword id="KW-0446">Lipid-binding</keyword>
<keyword id="KW-0472">Membrane</keyword>
<keyword id="KW-0479">Metal-binding</keyword>
<keyword id="KW-1185">Reference proteome</keyword>
<keyword id="KW-0862">Zinc</keyword>
<keyword id="KW-0863">Zinc-finger</keyword>
<name>MTMR3_CAEEL</name>
<comment type="function">
    <text evidence="2 8 9">Preferentially dephosphorylates phosphatidylinositol 3-phosphate (PI3P), and has some activity towards phosphatidylinositol 3,5-bisphosphate (PI35P) (PubMed:18393358, PubMed:25124690). Positively regulates autophagy and is recruited to autophagosomes by PI3P where it catalyzes PI3P turnover to promote autophagosome maturation (PubMed:25124690). Thought to have a role in maintenance of muscle function (PubMed:18393358). Involved in locomotion and lifespan determination (PubMed:18393358).</text>
</comment>
<comment type="catalytic activity">
    <reaction evidence="8 9">
        <text>a 1,2-diacyl-sn-glycero-3-phospho-(1D-myo-inositol-3,5-bisphosphate) + H2O = a 1,2-diacyl-sn-glycero-3-phospho-(1D-myo-inositol-5-phosphate) + phosphate</text>
        <dbReference type="Rhea" id="RHEA:39019"/>
        <dbReference type="ChEBI" id="CHEBI:15377"/>
        <dbReference type="ChEBI" id="CHEBI:43474"/>
        <dbReference type="ChEBI" id="CHEBI:57795"/>
        <dbReference type="ChEBI" id="CHEBI:57923"/>
        <dbReference type="EC" id="3.1.3.95"/>
    </reaction>
</comment>
<comment type="catalytic activity">
    <reaction evidence="8 9">
        <text>a 1,2-diacyl-sn-glycero-3-phospho-(1D-myo-inositol-3-phosphate) + H2O = a 1,2-diacyl-sn-glycero-3-phospho-(1D-myo-inositol) + phosphate</text>
        <dbReference type="Rhea" id="RHEA:12316"/>
        <dbReference type="ChEBI" id="CHEBI:15377"/>
        <dbReference type="ChEBI" id="CHEBI:43474"/>
        <dbReference type="ChEBI" id="CHEBI:57880"/>
        <dbReference type="ChEBI" id="CHEBI:58088"/>
    </reaction>
</comment>
<comment type="catalytic activity">
    <reaction evidence="2">
        <text>1,2-dihexadecanoyl-sn-glycero-3-phospho-(1D-myo-inositol-3-phosphate) + H2O = 1,2-dihexadecanoyl-sn-glycero-3-phospho-(1D-myo-inositol) + phosphate</text>
        <dbReference type="Rhea" id="RHEA:45640"/>
        <dbReference type="ChEBI" id="CHEBI:15377"/>
        <dbReference type="ChEBI" id="CHEBI:43474"/>
        <dbReference type="ChEBI" id="CHEBI:72835"/>
        <dbReference type="ChEBI" id="CHEBI:78995"/>
    </reaction>
</comment>
<comment type="catalytic activity">
    <reaction evidence="2">
        <text>1,2-dihexadecanoyl-sn-glycero-3-phospho-(1D-myo-inositol-3,5-phosphate) + H2O = 1,2-dihexadecanoyl-sn-glycero-3-phospho-(1D-myo-inositol-5-phosphate) + phosphate</text>
        <dbReference type="Rhea" id="RHEA:45636"/>
        <dbReference type="ChEBI" id="CHEBI:15377"/>
        <dbReference type="ChEBI" id="CHEBI:43474"/>
        <dbReference type="ChEBI" id="CHEBI:78994"/>
        <dbReference type="ChEBI" id="CHEBI:84968"/>
    </reaction>
</comment>
<comment type="catalytic activity">
    <reaction evidence="2">
        <text>1,2-dioctanoyl-sn-glycero-3-phospho-(1-D-myo-inositol-3-phosphate) + H2O = 1,2-dioctanoyl-sn-glycero-3-phospho-(1D-myo-inositol) + phosphate</text>
        <dbReference type="Rhea" id="RHEA:42328"/>
        <dbReference type="ChEBI" id="CHEBI:15377"/>
        <dbReference type="ChEBI" id="CHEBI:43474"/>
        <dbReference type="ChEBI" id="CHEBI:65221"/>
        <dbReference type="ChEBI" id="CHEBI:78934"/>
    </reaction>
</comment>
<comment type="activity regulation">
    <text evidence="8">Inhibited by sodium vanadate and peroxide.</text>
</comment>
<comment type="subcellular location">
    <subcellularLocation>
        <location evidence="9">Cytoplasm</location>
    </subcellularLocation>
    <subcellularLocation>
        <location evidence="2">Membrane</location>
        <topology evidence="2">Peripheral membrane protein</topology>
    </subcellularLocation>
</comment>
<comment type="alternative products">
    <event type="alternative splicing"/>
    <isoform>
        <id>Q22712-1</id>
        <name evidence="13">a</name>
        <sequence type="displayed"/>
    </isoform>
    <isoform>
        <id>Q22712-2</id>
        <name evidence="14">b</name>
        <sequence type="described" ref="VSP_035035 VSP_035036 VSP_035037"/>
    </isoform>
</comment>
<comment type="tissue specificity">
    <text evidence="7 8 9">Expressed in the body wall muscle and in eggs (PubMed:18393358). Expressed in head neurons (PubMed:12788949). Expressed in the intestine (PubMed:18393358, PubMed:25124690). Expressed in pharyngeal cells, vulval muscle cells and cells of the tail region (PubMed:25124690).</text>
</comment>
<comment type="developmental stage">
    <text evidence="8 9">Expressed in most cells during embryogenesis (PubMed:25124690). Expressed most strongly in the egg with expression present in L1 but reducing through to L3 where it is very weak. No expression was found in L4. Strong expression is also seen in egg-laying adults and post-reproductive adults.</text>
</comment>
<comment type="domain">
    <text evidence="8">Interacts with phosphatidylinositol 3-phosphate (PI3P) via the FYVE-type domain.</text>
</comment>
<comment type="disruption phenotype">
    <text evidence="8">Worms exhibit a 2-fold increase in PI3P, sluggish body movement with progressive deterioration and defects in gestation.</text>
</comment>
<comment type="similarity">
    <text evidence="11">Belongs to the protein-tyrosine phosphatase family. Non-receptor class myotubularin subfamily.</text>
</comment>
<comment type="sequence caution" evidence="11">
    <conflict type="frameshift">
        <sequence resource="EMBL-CDS" id="AAC78763"/>
    </conflict>
</comment>
<dbReference type="EC" id="3.1.3.95" evidence="8 9"/>
<dbReference type="EMBL" id="AF031519">
    <property type="protein sequence ID" value="AAC78763.1"/>
    <property type="status" value="ALT_FRAME"/>
    <property type="molecule type" value="mRNA"/>
</dbReference>
<dbReference type="EMBL" id="DQ988041">
    <property type="protein sequence ID" value="ABK59970.1"/>
    <property type="molecule type" value="mRNA"/>
</dbReference>
<dbReference type="EMBL" id="BX284603">
    <property type="protein sequence ID" value="CAA88884.2"/>
    <property type="molecule type" value="Genomic_DNA"/>
</dbReference>
<dbReference type="EMBL" id="BX284603">
    <property type="protein sequence ID" value="CAB61017.2"/>
    <property type="molecule type" value="Genomic_DNA"/>
</dbReference>
<dbReference type="PIR" id="T25215">
    <property type="entry name" value="T25215"/>
</dbReference>
<dbReference type="RefSeq" id="NP_001022794.2">
    <molecule id="Q22712-1"/>
    <property type="nucleotide sequence ID" value="NM_001027623.7"/>
</dbReference>
<dbReference type="RefSeq" id="NP_497766.3">
    <molecule id="Q22712-2"/>
    <property type="nucleotide sequence ID" value="NM_065365.6"/>
</dbReference>
<dbReference type="SMR" id="Q22712"/>
<dbReference type="BioGRID" id="40728">
    <property type="interactions" value="4"/>
</dbReference>
<dbReference type="FunCoup" id="Q22712">
    <property type="interactions" value="3028"/>
</dbReference>
<dbReference type="STRING" id="6239.T24A11.1a.1"/>
<dbReference type="PaxDb" id="6239-T24A11.1a"/>
<dbReference type="PeptideAtlas" id="Q22712"/>
<dbReference type="EnsemblMetazoa" id="T24A11.1a.1">
    <molecule id="Q22712-1"/>
    <property type="protein sequence ID" value="T24A11.1a.1"/>
    <property type="gene ID" value="WBGene00003476"/>
</dbReference>
<dbReference type="EnsemblMetazoa" id="T24A11.1b.1">
    <molecule id="Q22712-2"/>
    <property type="protein sequence ID" value="T24A11.1b.1"/>
    <property type="gene ID" value="WBGene00003476"/>
</dbReference>
<dbReference type="EnsemblMetazoa" id="T24A11.1b.2">
    <molecule id="Q22712-2"/>
    <property type="protein sequence ID" value="T24A11.1b.2"/>
    <property type="gene ID" value="WBGene00003476"/>
</dbReference>
<dbReference type="GeneID" id="175490"/>
<dbReference type="KEGG" id="cel:CELE_T24A11.1"/>
<dbReference type="UCSC" id="T24A11.1b">
    <property type="organism name" value="c. elegans"/>
</dbReference>
<dbReference type="AGR" id="WB:WBGene00003476"/>
<dbReference type="CTD" id="175490"/>
<dbReference type="WormBase" id="T24A11.1a">
    <molecule id="Q22712-1"/>
    <property type="protein sequence ID" value="CE28087"/>
    <property type="gene ID" value="WBGene00003476"/>
    <property type="gene designation" value="mtm-3"/>
</dbReference>
<dbReference type="WormBase" id="T24A11.1b">
    <molecule id="Q22712-2"/>
    <property type="protein sequence ID" value="CE42568"/>
    <property type="gene ID" value="WBGene00003476"/>
    <property type="gene designation" value="mtm-3"/>
</dbReference>
<dbReference type="eggNOG" id="KOG1089">
    <property type="taxonomic scope" value="Eukaryota"/>
</dbReference>
<dbReference type="GeneTree" id="ENSGT00940000172447"/>
<dbReference type="InParanoid" id="Q22712"/>
<dbReference type="OMA" id="FENTEYY"/>
<dbReference type="OrthoDB" id="271628at2759"/>
<dbReference type="PhylomeDB" id="Q22712"/>
<dbReference type="Reactome" id="R-CEL-1660499">
    <property type="pathway name" value="Synthesis of PIPs at the plasma membrane"/>
</dbReference>
<dbReference type="Reactome" id="R-CEL-1660516">
    <property type="pathway name" value="Synthesis of PIPs at the early endosome membrane"/>
</dbReference>
<dbReference type="Reactome" id="R-CEL-1660517">
    <property type="pathway name" value="Synthesis of PIPs at the late endosome membrane"/>
</dbReference>
<dbReference type="Reactome" id="R-CEL-9035034">
    <property type="pathway name" value="RHOF GTPase cycle"/>
</dbReference>
<dbReference type="PRO" id="PR:Q22712"/>
<dbReference type="Proteomes" id="UP000001940">
    <property type="component" value="Chromosome III"/>
</dbReference>
<dbReference type="Bgee" id="WBGene00003476">
    <property type="expression patterns" value="Expressed in pharyngeal muscle cell (C elegans) and 4 other cell types or tissues"/>
</dbReference>
<dbReference type="GO" id="GO:0005737">
    <property type="term" value="C:cytoplasm"/>
    <property type="evidence" value="ECO:0000314"/>
    <property type="project" value="UniProtKB"/>
</dbReference>
<dbReference type="GO" id="GO:0016020">
    <property type="term" value="C:membrane"/>
    <property type="evidence" value="ECO:0007669"/>
    <property type="project" value="UniProtKB-SubCell"/>
</dbReference>
<dbReference type="GO" id="GO:0016312">
    <property type="term" value="F:inositol bisphosphate phosphatase activity"/>
    <property type="evidence" value="ECO:0000314"/>
    <property type="project" value="WormBase"/>
</dbReference>
<dbReference type="GO" id="GO:0008289">
    <property type="term" value="F:lipid binding"/>
    <property type="evidence" value="ECO:0007669"/>
    <property type="project" value="UniProtKB-KW"/>
</dbReference>
<dbReference type="GO" id="GO:0034594">
    <property type="term" value="F:phosphatidylinositol trisphosphate phosphatase activity"/>
    <property type="evidence" value="ECO:0000314"/>
    <property type="project" value="WormBase"/>
</dbReference>
<dbReference type="GO" id="GO:0052629">
    <property type="term" value="F:phosphatidylinositol-3,5-bisphosphate 3-phosphatase activity"/>
    <property type="evidence" value="ECO:0000314"/>
    <property type="project" value="UniProtKB"/>
</dbReference>
<dbReference type="GO" id="GO:0106018">
    <property type="term" value="F:phosphatidylinositol-3,5-bisphosphate phosphatase activity"/>
    <property type="evidence" value="ECO:0000318"/>
    <property type="project" value="GO_Central"/>
</dbReference>
<dbReference type="GO" id="GO:0004438">
    <property type="term" value="F:phosphatidylinositol-3-phosphate phosphatase activity"/>
    <property type="evidence" value="ECO:0000314"/>
    <property type="project" value="UniProtKB"/>
</dbReference>
<dbReference type="GO" id="GO:0004725">
    <property type="term" value="F:protein tyrosine phosphatase activity"/>
    <property type="evidence" value="ECO:0007669"/>
    <property type="project" value="UniProtKB-EC"/>
</dbReference>
<dbReference type="GO" id="GO:0008270">
    <property type="term" value="F:zinc ion binding"/>
    <property type="evidence" value="ECO:0007669"/>
    <property type="project" value="UniProtKB-KW"/>
</dbReference>
<dbReference type="GO" id="GO:0008340">
    <property type="term" value="P:determination of adult lifespan"/>
    <property type="evidence" value="ECO:0000315"/>
    <property type="project" value="WormBase"/>
</dbReference>
<dbReference type="GO" id="GO:0040011">
    <property type="term" value="P:locomotion"/>
    <property type="evidence" value="ECO:0000315"/>
    <property type="project" value="WormBase"/>
</dbReference>
<dbReference type="GO" id="GO:1901075">
    <property type="term" value="P:negative regulation of engulfment of apoptotic cell"/>
    <property type="evidence" value="ECO:0000316"/>
    <property type="project" value="WormBase"/>
</dbReference>
<dbReference type="GO" id="GO:0046856">
    <property type="term" value="P:phosphatidylinositol dephosphorylation"/>
    <property type="evidence" value="ECO:0000250"/>
    <property type="project" value="UniProtKB"/>
</dbReference>
<dbReference type="GO" id="GO:1901098">
    <property type="term" value="P:positive regulation of autophagosome maturation"/>
    <property type="evidence" value="ECO:0000315"/>
    <property type="project" value="UniProtKB"/>
</dbReference>
<dbReference type="GO" id="GO:0010508">
    <property type="term" value="P:positive regulation of autophagy"/>
    <property type="evidence" value="ECO:0000315"/>
    <property type="project" value="UniProtKB"/>
</dbReference>
<dbReference type="GO" id="GO:0045807">
    <property type="term" value="P:positive regulation of endocytosis"/>
    <property type="evidence" value="ECO:0000315"/>
    <property type="project" value="WormBase"/>
</dbReference>
<dbReference type="GO" id="GO:0046662">
    <property type="term" value="P:regulation of egg-laying behavior"/>
    <property type="evidence" value="ECO:0000315"/>
    <property type="project" value="WormBase"/>
</dbReference>
<dbReference type="GO" id="GO:0042594">
    <property type="term" value="P:response to starvation"/>
    <property type="evidence" value="ECO:0000315"/>
    <property type="project" value="UniProtKB"/>
</dbReference>
<dbReference type="CDD" id="cd00065">
    <property type="entry name" value="FYVE_like_SF"/>
    <property type="match status" value="1"/>
</dbReference>
<dbReference type="CDD" id="cd14507">
    <property type="entry name" value="PTP-MTM-like"/>
    <property type="match status" value="1"/>
</dbReference>
<dbReference type="FunFam" id="3.30.40.10:FF:000105">
    <property type="entry name" value="WD repeat and FYVE domain-containing protein 2"/>
    <property type="match status" value="1"/>
</dbReference>
<dbReference type="Gene3D" id="3.30.40.10">
    <property type="entry name" value="Zinc/RING finger domain, C3HC4 (zinc finger)"/>
    <property type="match status" value="1"/>
</dbReference>
<dbReference type="InterPro" id="IPR030564">
    <property type="entry name" value="Myotubularin"/>
</dbReference>
<dbReference type="InterPro" id="IPR010569">
    <property type="entry name" value="Myotubularin-like_Pase_dom"/>
</dbReference>
<dbReference type="InterPro" id="IPR029021">
    <property type="entry name" value="Prot-tyrosine_phosphatase-like"/>
</dbReference>
<dbReference type="InterPro" id="IPR016130">
    <property type="entry name" value="Tyr_Pase_AS"/>
</dbReference>
<dbReference type="InterPro" id="IPR003595">
    <property type="entry name" value="Tyr_Pase_cat"/>
</dbReference>
<dbReference type="InterPro" id="IPR000306">
    <property type="entry name" value="Znf_FYVE"/>
</dbReference>
<dbReference type="InterPro" id="IPR017455">
    <property type="entry name" value="Znf_FYVE-rel"/>
</dbReference>
<dbReference type="InterPro" id="IPR011011">
    <property type="entry name" value="Znf_FYVE_PHD"/>
</dbReference>
<dbReference type="InterPro" id="IPR013083">
    <property type="entry name" value="Znf_RING/FYVE/PHD"/>
</dbReference>
<dbReference type="PANTHER" id="PTHR10807">
    <property type="entry name" value="MYOTUBULARIN-RELATED"/>
    <property type="match status" value="1"/>
</dbReference>
<dbReference type="PANTHER" id="PTHR10807:SF129">
    <property type="entry name" value="MYOTUBULARIN-RELATED PROTEIN 3"/>
    <property type="match status" value="1"/>
</dbReference>
<dbReference type="Pfam" id="PF01363">
    <property type="entry name" value="FYVE"/>
    <property type="match status" value="1"/>
</dbReference>
<dbReference type="Pfam" id="PF06602">
    <property type="entry name" value="Myotub-related"/>
    <property type="match status" value="1"/>
</dbReference>
<dbReference type="SMART" id="SM00064">
    <property type="entry name" value="FYVE"/>
    <property type="match status" value="1"/>
</dbReference>
<dbReference type="SMART" id="SM00404">
    <property type="entry name" value="PTPc_motif"/>
    <property type="match status" value="1"/>
</dbReference>
<dbReference type="SUPFAM" id="SSF52799">
    <property type="entry name" value="(Phosphotyrosine protein) phosphatases II"/>
    <property type="match status" value="1"/>
</dbReference>
<dbReference type="SUPFAM" id="SSF57903">
    <property type="entry name" value="FYVE/PHD zinc finger"/>
    <property type="match status" value="1"/>
</dbReference>
<dbReference type="PROSITE" id="PS51339">
    <property type="entry name" value="PPASE_MYOTUBULARIN"/>
    <property type="match status" value="1"/>
</dbReference>
<dbReference type="PROSITE" id="PS00383">
    <property type="entry name" value="TYR_PHOSPHATASE_1"/>
    <property type="match status" value="1"/>
</dbReference>
<dbReference type="PROSITE" id="PS50178">
    <property type="entry name" value="ZF_FYVE"/>
    <property type="match status" value="1"/>
</dbReference>
<proteinExistence type="evidence at protein level"/>
<evidence type="ECO:0000250" key="1">
    <source>
        <dbReference type="UniProtKB" id="Q13614"/>
    </source>
</evidence>
<evidence type="ECO:0000250" key="2">
    <source>
        <dbReference type="UniProtKB" id="Q13615"/>
    </source>
</evidence>
<evidence type="ECO:0000255" key="3">
    <source>
        <dbReference type="PROSITE-ProRule" id="PRU00091"/>
    </source>
</evidence>
<evidence type="ECO:0000255" key="4">
    <source>
        <dbReference type="PROSITE-ProRule" id="PRU00669"/>
    </source>
</evidence>
<evidence type="ECO:0000255" key="5">
    <source>
        <dbReference type="PROSITE-ProRule" id="PRU10044"/>
    </source>
</evidence>
<evidence type="ECO:0000256" key="6">
    <source>
        <dbReference type="SAM" id="MobiDB-lite"/>
    </source>
</evidence>
<evidence type="ECO:0000269" key="7">
    <source>
    </source>
</evidence>
<evidence type="ECO:0000269" key="8">
    <source>
    </source>
</evidence>
<evidence type="ECO:0000269" key="9">
    <source>
    </source>
</evidence>
<evidence type="ECO:0000303" key="10">
    <source>
    </source>
</evidence>
<evidence type="ECO:0000305" key="11"/>
<evidence type="ECO:0000305" key="12">
    <source>
    </source>
</evidence>
<evidence type="ECO:0000312" key="13">
    <source>
        <dbReference type="WormBase" id="T24A11.1a"/>
    </source>
</evidence>
<evidence type="ECO:0000312" key="14">
    <source>
        <dbReference type="WormBase" id="T24A11.1b"/>
    </source>
</evidence>
<protein>
    <recommendedName>
        <fullName evidence="12">Phosphatidylinositol-3,5-bisphosphate 3-phosphatase MTMR3</fullName>
        <ecNumber evidence="8 9">3.1.3.95</ecNumber>
    </recommendedName>
    <alternativeName>
        <fullName>Myotubularin homologous protein 1</fullName>
        <shortName>ceMTMH1</shortName>
    </alternativeName>
    <alternativeName>
        <fullName>Myotubularin-related protein 3</fullName>
        <shortName>ceMTM3</shortName>
    </alternativeName>
    <alternativeName>
        <fullName evidence="12">Phosphatidylinositol-3,5-bisphosphate 3-phosphatase</fullName>
    </alternativeName>
    <alternativeName>
        <fullName evidence="12">Phosphatidylinositol-3-phosphate phosphatase</fullName>
    </alternativeName>
</protein>